<reference key="1">
    <citation type="journal article" date="2006" name="Genes Chromosomes Cancer">
        <title>Comprehensive genome and transcriptome analysis of the 11q13 amplicon in human oral cancer and synteny to the 7F5 amplicon in murine oral carcinoma.</title>
        <authorList>
            <person name="Huang X."/>
            <person name="Godfrey T.E."/>
            <person name="Gooding W.E."/>
            <person name="McCarty K.S. Jr."/>
            <person name="Gollin S.M."/>
        </authorList>
    </citation>
    <scope>NUCLEOTIDE SEQUENCE [MRNA] (ISOFORM 1)</scope>
    <scope>TISSUE SPECIFICITY</scope>
</reference>
<reference key="2">
    <citation type="journal article" date="2015" name="Am. J. Physiol.">
        <title>A novel exon in the human Ca2+-activated Cl- channel Ano1 imparts greater sensitivity to intracellular Ca2.</title>
        <authorList>
            <person name="Strege P.R."/>
            <person name="Bernard C.E."/>
            <person name="Mazzone A."/>
            <person name="Linden D.R."/>
            <person name="Beyder A."/>
            <person name="Gibbons S.J."/>
            <person name="Farrugia G."/>
        </authorList>
    </citation>
    <scope>NUCLEOTIDE SEQUENCE [MRNA] (ISOFORM 5)</scope>
    <scope>FUNCTION</scope>
</reference>
<reference key="3">
    <citation type="journal article" date="2004" name="Nat. Genet.">
        <title>Complete sequencing and characterization of 21,243 full-length human cDNAs.</title>
        <authorList>
            <person name="Ota T."/>
            <person name="Suzuki Y."/>
            <person name="Nishikawa T."/>
            <person name="Otsuki T."/>
            <person name="Sugiyama T."/>
            <person name="Irie R."/>
            <person name="Wakamatsu A."/>
            <person name="Hayashi K."/>
            <person name="Sato H."/>
            <person name="Nagai K."/>
            <person name="Kimura K."/>
            <person name="Makita H."/>
            <person name="Sekine M."/>
            <person name="Obayashi M."/>
            <person name="Nishi T."/>
            <person name="Shibahara T."/>
            <person name="Tanaka T."/>
            <person name="Ishii S."/>
            <person name="Yamamoto J."/>
            <person name="Saito K."/>
            <person name="Kawai Y."/>
            <person name="Isono Y."/>
            <person name="Nakamura Y."/>
            <person name="Nagahari K."/>
            <person name="Murakami K."/>
            <person name="Yasuda T."/>
            <person name="Iwayanagi T."/>
            <person name="Wagatsuma M."/>
            <person name="Shiratori A."/>
            <person name="Sudo H."/>
            <person name="Hosoiri T."/>
            <person name="Kaku Y."/>
            <person name="Kodaira H."/>
            <person name="Kondo H."/>
            <person name="Sugawara M."/>
            <person name="Takahashi M."/>
            <person name="Kanda K."/>
            <person name="Yokoi T."/>
            <person name="Furuya T."/>
            <person name="Kikkawa E."/>
            <person name="Omura Y."/>
            <person name="Abe K."/>
            <person name="Kamihara K."/>
            <person name="Katsuta N."/>
            <person name="Sato K."/>
            <person name="Tanikawa M."/>
            <person name="Yamazaki M."/>
            <person name="Ninomiya K."/>
            <person name="Ishibashi T."/>
            <person name="Yamashita H."/>
            <person name="Murakawa K."/>
            <person name="Fujimori K."/>
            <person name="Tanai H."/>
            <person name="Kimata M."/>
            <person name="Watanabe M."/>
            <person name="Hiraoka S."/>
            <person name="Chiba Y."/>
            <person name="Ishida S."/>
            <person name="Ono Y."/>
            <person name="Takiguchi S."/>
            <person name="Watanabe S."/>
            <person name="Yosida M."/>
            <person name="Hotuta T."/>
            <person name="Kusano J."/>
            <person name="Kanehori K."/>
            <person name="Takahashi-Fujii A."/>
            <person name="Hara H."/>
            <person name="Tanase T.-O."/>
            <person name="Nomura Y."/>
            <person name="Togiya S."/>
            <person name="Komai F."/>
            <person name="Hara R."/>
            <person name="Takeuchi K."/>
            <person name="Arita M."/>
            <person name="Imose N."/>
            <person name="Musashino K."/>
            <person name="Yuuki H."/>
            <person name="Oshima A."/>
            <person name="Sasaki N."/>
            <person name="Aotsuka S."/>
            <person name="Yoshikawa Y."/>
            <person name="Matsunawa H."/>
            <person name="Ichihara T."/>
            <person name="Shiohata N."/>
            <person name="Sano S."/>
            <person name="Moriya S."/>
            <person name="Momiyama H."/>
            <person name="Satoh N."/>
            <person name="Takami S."/>
            <person name="Terashima Y."/>
            <person name="Suzuki O."/>
            <person name="Nakagawa S."/>
            <person name="Senoh A."/>
            <person name="Mizoguchi H."/>
            <person name="Goto Y."/>
            <person name="Shimizu F."/>
            <person name="Wakebe H."/>
            <person name="Hishigaki H."/>
            <person name="Watanabe T."/>
            <person name="Sugiyama A."/>
            <person name="Takemoto M."/>
            <person name="Kawakami B."/>
            <person name="Yamazaki M."/>
            <person name="Watanabe K."/>
            <person name="Kumagai A."/>
            <person name="Itakura S."/>
            <person name="Fukuzumi Y."/>
            <person name="Fujimori Y."/>
            <person name="Komiyama M."/>
            <person name="Tashiro H."/>
            <person name="Tanigami A."/>
            <person name="Fujiwara T."/>
            <person name="Ono T."/>
            <person name="Yamada K."/>
            <person name="Fujii Y."/>
            <person name="Ozaki K."/>
            <person name="Hirao M."/>
            <person name="Ohmori Y."/>
            <person name="Kawabata A."/>
            <person name="Hikiji T."/>
            <person name="Kobatake N."/>
            <person name="Inagaki H."/>
            <person name="Ikema Y."/>
            <person name="Okamoto S."/>
            <person name="Okitani R."/>
            <person name="Kawakami T."/>
            <person name="Noguchi S."/>
            <person name="Itoh T."/>
            <person name="Shigeta K."/>
            <person name="Senba T."/>
            <person name="Matsumura K."/>
            <person name="Nakajima Y."/>
            <person name="Mizuno T."/>
            <person name="Morinaga M."/>
            <person name="Sasaki M."/>
            <person name="Togashi T."/>
            <person name="Oyama M."/>
            <person name="Hata H."/>
            <person name="Watanabe M."/>
            <person name="Komatsu T."/>
            <person name="Mizushima-Sugano J."/>
            <person name="Satoh T."/>
            <person name="Shirai Y."/>
            <person name="Takahashi Y."/>
            <person name="Nakagawa K."/>
            <person name="Okumura K."/>
            <person name="Nagase T."/>
            <person name="Nomura N."/>
            <person name="Kikuchi H."/>
            <person name="Masuho Y."/>
            <person name="Yamashita R."/>
            <person name="Nakai K."/>
            <person name="Yada T."/>
            <person name="Nakamura Y."/>
            <person name="Ohara O."/>
            <person name="Isogai T."/>
            <person name="Sugano S."/>
        </authorList>
    </citation>
    <scope>NUCLEOTIDE SEQUENCE [LARGE SCALE MRNA] (ISOFORMS 1 AND 3)</scope>
    <source>
        <tissue>Testis</tissue>
        <tissue>Uterus</tissue>
    </source>
</reference>
<reference key="4">
    <citation type="journal article" date="2006" name="Nature">
        <title>Human chromosome 11 DNA sequence and analysis including novel gene identification.</title>
        <authorList>
            <person name="Taylor T.D."/>
            <person name="Noguchi H."/>
            <person name="Totoki Y."/>
            <person name="Toyoda A."/>
            <person name="Kuroki Y."/>
            <person name="Dewar K."/>
            <person name="Lloyd C."/>
            <person name="Itoh T."/>
            <person name="Takeda T."/>
            <person name="Kim D.-W."/>
            <person name="She X."/>
            <person name="Barlow K.F."/>
            <person name="Bloom T."/>
            <person name="Bruford E."/>
            <person name="Chang J.L."/>
            <person name="Cuomo C.A."/>
            <person name="Eichler E."/>
            <person name="FitzGerald M.G."/>
            <person name="Jaffe D.B."/>
            <person name="LaButti K."/>
            <person name="Nicol R."/>
            <person name="Park H.-S."/>
            <person name="Seaman C."/>
            <person name="Sougnez C."/>
            <person name="Yang X."/>
            <person name="Zimmer A.R."/>
            <person name="Zody M.C."/>
            <person name="Birren B.W."/>
            <person name="Nusbaum C."/>
            <person name="Fujiyama A."/>
            <person name="Hattori M."/>
            <person name="Rogers J."/>
            <person name="Lander E.S."/>
            <person name="Sakaki Y."/>
        </authorList>
    </citation>
    <scope>NUCLEOTIDE SEQUENCE [LARGE SCALE GENOMIC DNA]</scope>
</reference>
<reference key="5">
    <citation type="journal article" date="2004" name="Genome Res.">
        <title>The status, quality, and expansion of the NIH full-length cDNA project: the Mammalian Gene Collection (MGC).</title>
        <authorList>
            <consortium name="The MGC Project Team"/>
        </authorList>
    </citation>
    <scope>NUCLEOTIDE SEQUENCE [LARGE SCALE MRNA] (ISOFORM 2)</scope>
    <source>
        <tissue>Testis</tissue>
    </source>
</reference>
<reference key="6">
    <citation type="journal article" date="2003" name="Int. J. Oncol.">
        <title>FLJ10261 gene, located within the CCND1-EMS1 locus on human chromosome 11q13, encodes the eight-transmembrane protein homologous to C12orf3, C11orf25 and FLJ34272 gene products.</title>
        <authorList>
            <person name="Katoh M."/>
            <person name="Katoh M."/>
        </authorList>
    </citation>
    <scope>IDENTIFICATION</scope>
    <scope>TOPOLOGY</scope>
</reference>
<reference key="7">
    <citation type="journal article" date="2004" name="Am. J. Pathol.">
        <title>The novel marker, DOG1, is expressed ubiquitously in gastrointestinal stromal tumors irrespective of KIT or PDGFRA mutation status.</title>
        <authorList>
            <person name="West R.B."/>
            <person name="Corless C.L."/>
            <person name="Chen X."/>
            <person name="Rubin B.P."/>
            <person name="Subramanian S."/>
            <person name="Montgomery K."/>
            <person name="Zhu S."/>
            <person name="Ball C.A."/>
            <person name="Nielsen T.O."/>
            <person name="Patel R."/>
            <person name="Goldblum J.R."/>
            <person name="Brown P.O."/>
            <person name="Heinrich M.C."/>
            <person name="van de Rijn M."/>
        </authorList>
    </citation>
    <scope>SUBCELLULAR LOCATION</scope>
    <scope>TISSUE SPECIFICITY</scope>
</reference>
<reference key="8">
    <citation type="journal article" date="2010" name="J. Biol. Chem.">
        <title>Expression and function of epithelial anoctamins.</title>
        <authorList>
            <person name="Schreiber R."/>
            <person name="Uliyakina I."/>
            <person name="Kongsuphol P."/>
            <person name="Warth R."/>
            <person name="Mirza M."/>
            <person name="Martins J.R."/>
            <person name="Kunzelmann K."/>
        </authorList>
    </citation>
    <scope>FUNCTION</scope>
    <scope>TRANSPORTER ACTIVITY</scope>
    <scope>SUBCELLULAR LOCATION</scope>
</reference>
<reference key="9">
    <citation type="journal article" date="2011" name="BMC Syst. Biol.">
        <title>Initial characterization of the human central proteome.</title>
        <authorList>
            <person name="Burkard T.R."/>
            <person name="Planyavsky M."/>
            <person name="Kaupe I."/>
            <person name="Breitwieser F.P."/>
            <person name="Buerckstuemmer T."/>
            <person name="Bennett K.L."/>
            <person name="Superti-Furga G."/>
            <person name="Colinge J."/>
        </authorList>
    </citation>
    <scope>IDENTIFICATION BY MASS SPECTROMETRY [LARGE SCALE ANALYSIS]</scope>
</reference>
<reference key="10">
    <citation type="journal article" date="2011" name="Cell. Physiol. Biochem.">
        <title>CFTR and TMEM16A are separate but functionally related Cl-channels.</title>
        <authorList>
            <person name="Ousingsawat J."/>
            <person name="Kongsuphol P."/>
            <person name="Schreiber R."/>
            <person name="Kunzelmann K."/>
        </authorList>
    </citation>
    <scope>FUNCTION</scope>
    <scope>TRANSPORTER ACTIVITY</scope>
    <scope>SUBCELLULAR LOCATION</scope>
    <scope>INTERACTION WITH CFTR</scope>
    <scope>ACTIVITY REGULATION</scope>
</reference>
<reference key="11">
    <citation type="journal article" date="2011" name="J. Biol. Chem.">
        <title>Characterization of the oligomeric structure of the Ca(2+)-activated Cl- channel Ano1/TMEM16A.</title>
        <authorList>
            <person name="Sheridan J.T."/>
            <person name="Worthington E.N."/>
            <person name="Yu K."/>
            <person name="Gabriel S.E."/>
            <person name="Hartzell H.C."/>
            <person name="Tarran R."/>
        </authorList>
    </citation>
    <scope>SUBUNIT</scope>
</reference>
<reference key="12">
    <citation type="journal article" date="2012" name="J. Cell Sci.">
        <title>Anoctamins are a family of Ca2+ activated Cl- channels.</title>
        <authorList>
            <person name="Tian Y."/>
            <person name="Schreiber R."/>
            <person name="Kunzelmann K."/>
        </authorList>
    </citation>
    <scope>FUNCTION</scope>
    <scope>TRANSPORTER ACTIVITY</scope>
    <scope>SUBCELLULAR LOCATION</scope>
</reference>
<reference key="13">
    <citation type="journal article" date="2014" name="Acta Physiol.">
        <title>TMEM16A is a Ca(2+) -activated Cl(-) channel expressed in the renal collecting duct.</title>
        <authorList>
            <person name="Svenningsen P."/>
            <person name="Nielsen M.R."/>
            <person name="Marcussen N."/>
            <person name="Walter S."/>
            <person name="Jensen B.L."/>
        </authorList>
    </citation>
    <scope>TISSUE SPECIFICITY</scope>
</reference>
<reference key="14">
    <citation type="journal article" date="2014" name="Exp. Dermatol.">
        <title>A novel TMEM16A splice variant lacking the dimerization domain contributes to calcium-activated chloride secretion in human sweat gland epithelial cells.</title>
        <authorList>
            <person name="Ertongur-Fauth T."/>
            <person name="Hochheimer A."/>
            <person name="Buescher J.M."/>
            <person name="Rapprich S."/>
            <person name="Krohn M."/>
        </authorList>
    </citation>
    <scope>ALTERNATIVE SPLICING (ISOFORM 4)</scope>
    <scope>FUNCTION</scope>
    <scope>TISSUE SPECIFICITY</scope>
</reference>
<reference key="15">
    <citation type="journal article" date="2014" name="J. Proteomics">
        <title>An enzyme assisted RP-RPLC approach for in-depth analysis of human liver phosphoproteome.</title>
        <authorList>
            <person name="Bian Y."/>
            <person name="Song C."/>
            <person name="Cheng K."/>
            <person name="Dong M."/>
            <person name="Wang F."/>
            <person name="Huang J."/>
            <person name="Sun D."/>
            <person name="Wang L."/>
            <person name="Ye M."/>
            <person name="Zou H."/>
        </authorList>
    </citation>
    <scope>PHOSPHORYLATION [LARGE SCALE ANALYSIS] AT SER-107 AND SER-196</scope>
    <scope>IDENTIFICATION BY MASS SPECTROMETRY [LARGE SCALE ANALYSIS]</scope>
    <source>
        <tissue>Liver</tissue>
    </source>
</reference>
<reference key="16">
    <citation type="journal article" date="2017" name="J. Struct. Biol.">
        <title>The stoichiometry of the TMEM16A ion channel determined in intact plasma membranes of COS-7 cells using liquid-phase electron microscopy.</title>
        <authorList>
            <person name="Peckys D.B."/>
            <person name="Stoerger C."/>
            <person name="Latta L."/>
            <person name="Wissenbach U."/>
            <person name="Flockerzi V."/>
            <person name="de Jonge N."/>
        </authorList>
    </citation>
    <scope>SUBUNIT</scope>
    <scope>SUBCELLULAR LOCATION</scope>
</reference>
<reference key="17">
    <citation type="journal article" date="2017" name="Sci. Rep.">
        <title>Epithelial Chloride Transport by CFTR Requires TMEM16A.</title>
        <authorList>
            <person name="Benedetto R."/>
            <person name="Ousingsawat J."/>
            <person name="Wanitchakool P."/>
            <person name="Zhang Y."/>
            <person name="Holtzman M.J."/>
            <person name="Amaral M."/>
            <person name="Rock J.R."/>
            <person name="Schreiber R."/>
            <person name="Kunzelmann K."/>
        </authorList>
    </citation>
    <scope>FUNCTION</scope>
    <scope>INTERACTION WITH CFTR</scope>
</reference>
<reference key="18">
    <citation type="journal article" date="2019" name="Life. Sci Alliance">
        <title>TMEM16A chloride channel does not drive mucus production.</title>
        <authorList>
            <person name="Simoes F.B."/>
            <person name="Quaresma M.C."/>
            <person name="Clarke L.A."/>
            <person name="Silva I.A."/>
            <person name="Pankonien I."/>
            <person name="Railean V."/>
            <person name="Kmit A."/>
            <person name="Amaral M.D."/>
        </authorList>
    </citation>
    <scope>FUNCTION</scope>
    <scope>SUBCELLULAR LOCATION</scope>
    <scope>DEVELOPMENTAL STAGE</scope>
    <scope>INDUCTION</scope>
</reference>
<reference key="19">
    <citation type="journal article" date="2021" name="Am. J. Respir. Cell Mol. Biol.">
        <title>TMEM16A Mediates Mucus Production in Human Airway Epithelial Cells.</title>
        <authorList>
            <person name="Cabrita I."/>
            <person name="Benedetto R."/>
            <person name="Wanitchakool P."/>
            <person name="Lerias J."/>
            <person name="Centeio R."/>
            <person name="Ousingsawat J."/>
            <person name="Schreiber R."/>
            <person name="Kunzelmann K."/>
        </authorList>
    </citation>
    <scope>FUNCTION</scope>
    <scope>INDUCTION</scope>
</reference>
<reference key="20">
    <citation type="journal article" date="2021" name="J. Med. Genet.">
        <title>TMEM16A deficiency: a potentially fatal neonatal disease resulting from impaired chloride currents.</title>
        <authorList>
            <person name="Park J.H."/>
            <person name="Ousingsawat J."/>
            <person name="Cabrita I."/>
            <person name="Bettels R.E."/>
            <person name="Grosse-Onnebrink J."/>
            <person name="Schmalstieg C."/>
            <person name="Biskup S."/>
            <person name="Reunert J."/>
            <person name="Rust S."/>
            <person name="Schreiber R."/>
            <person name="Kunzelmann K."/>
            <person name="Marquardt T."/>
        </authorList>
    </citation>
    <scope>FUNCTION</scope>
    <scope>TRANSPORTER ACTIVITY</scope>
    <scope>SUBCELLULAR LOCATION</scope>
    <scope>TISSUE SPECIFICITY</scope>
    <scope>INVOLVEMENT IN IDMTS</scope>
</reference>
<reference key="21">
    <citation type="journal article" date="2023" name="Brain">
        <title>Rare variants in ANO1, encoding a calcium-activated chloride channel, predispose to moyamoya disease.</title>
        <authorList>
            <consortium name="University of Washington Center for Mendelian Genomics"/>
            <person name="Pinard A."/>
            <person name="Ye W."/>
            <person name="Fraser S.M."/>
            <person name="Rosenfeld J.A."/>
            <person name="Pichurin P."/>
            <person name="Hickey S.E."/>
            <person name="Guo D."/>
            <person name="Cecchi A.C."/>
            <person name="Boerio M.L."/>
            <person name="Guey S."/>
            <person name="Aloui C."/>
            <person name="Lee K."/>
            <person name="Kraemer M."/>
            <person name="Alyemni S.O."/>
            <person name="Bamshad M.J."/>
            <person name="Nickerson D.A."/>
            <person name="Tournier-Lasserve E."/>
            <person name="Haider S."/>
            <person name="Jin S.C."/>
            <person name="Smith E.R."/>
            <person name="Kahle K.T."/>
            <person name="Jan L.Y."/>
            <person name="He M."/>
            <person name="Milewicz D.M."/>
        </authorList>
    </citation>
    <scope>VARIANTS MYMY7 GLN-77; LYS-170; THR-196; LYS-459; VAL-658; ILE-740 AND GLN-890</scope>
    <scope>CHARACTERIZATION OF VARIANTS MYM7 GLN-77; LYS-170; THR-196; LYS-459; VAL-658; ILE-740 AND GLN-890</scope>
    <scope>TRANSPORTER ACTIVITY</scope>
    <scope>FUNCTION</scope>
</reference>
<gene>
    <name type="primary">ANO1</name>
    <name evidence="21" type="synonym">DOG1</name>
    <name type="synonym">ORAOV2</name>
    <name type="synonym">TAOS2</name>
    <name type="synonym">TMEM16A</name>
</gene>
<dbReference type="EMBL" id="AY728143">
    <property type="protein sequence ID" value="AAU82085.1"/>
    <property type="molecule type" value="mRNA"/>
</dbReference>
<dbReference type="EMBL" id="KY449273">
    <property type="protein sequence ID" value="AUD55143.1"/>
    <property type="molecule type" value="mRNA"/>
</dbReference>
<dbReference type="EMBL" id="AK097619">
    <property type="protein sequence ID" value="BAC05123.1"/>
    <property type="molecule type" value="mRNA"/>
</dbReference>
<dbReference type="EMBL" id="AK293088">
    <property type="protein sequence ID" value="BAF85777.1"/>
    <property type="molecule type" value="mRNA"/>
</dbReference>
<dbReference type="EMBL" id="AP000879">
    <property type="status" value="NOT_ANNOTATED_CDS"/>
    <property type="molecule type" value="Genomic_DNA"/>
</dbReference>
<dbReference type="EMBL" id="AP003555">
    <property type="status" value="NOT_ANNOTATED_CDS"/>
    <property type="molecule type" value="Genomic_DNA"/>
</dbReference>
<dbReference type="EMBL" id="BC033036">
    <property type="protein sequence ID" value="AAH33036.2"/>
    <property type="molecule type" value="mRNA"/>
</dbReference>
<dbReference type="CCDS" id="CCDS44663.1">
    <molecule id="Q5XXA6-1"/>
</dbReference>
<dbReference type="CCDS" id="CCDS91524.1">
    <molecule id="Q5XXA6-5"/>
</dbReference>
<dbReference type="RefSeq" id="NP_001365021.1">
    <molecule id="Q5XXA6-5"/>
    <property type="nucleotide sequence ID" value="NM_001378092.1"/>
</dbReference>
<dbReference type="RefSeq" id="NP_001365026.1">
    <molecule id="Q5XXA6-4"/>
    <property type="nucleotide sequence ID" value="NM_001378097.2"/>
</dbReference>
<dbReference type="RefSeq" id="NP_060513.5">
    <molecule id="Q5XXA6-1"/>
    <property type="nucleotide sequence ID" value="NM_018043.5"/>
</dbReference>
<dbReference type="RefSeq" id="XP_006718668.1">
    <property type="nucleotide sequence ID" value="XM_006718605.2"/>
</dbReference>
<dbReference type="RefSeq" id="XP_011543433.1">
    <molecule id="Q5XXA6-3"/>
    <property type="nucleotide sequence ID" value="XM_011545131.3"/>
</dbReference>
<dbReference type="RefSeq" id="XP_047283142.1">
    <molecule id="Q5XXA6-1"/>
    <property type="nucleotide sequence ID" value="XM_047427186.1"/>
</dbReference>
<dbReference type="RefSeq" id="XP_054225209.1">
    <molecule id="Q5XXA6-1"/>
    <property type="nucleotide sequence ID" value="XM_054369234.1"/>
</dbReference>
<dbReference type="RefSeq" id="XP_054225213.1">
    <molecule id="Q5XXA6-3"/>
    <property type="nucleotide sequence ID" value="XM_054369238.1"/>
</dbReference>
<dbReference type="SMR" id="Q5XXA6"/>
<dbReference type="BioGRID" id="120417">
    <property type="interactions" value="11"/>
</dbReference>
<dbReference type="CORUM" id="Q5XXA6"/>
<dbReference type="FunCoup" id="Q5XXA6">
    <property type="interactions" value="582"/>
</dbReference>
<dbReference type="IntAct" id="Q5XXA6">
    <property type="interactions" value="4"/>
</dbReference>
<dbReference type="STRING" id="9606.ENSP00000347454"/>
<dbReference type="BindingDB" id="Q5XXA6"/>
<dbReference type="ChEMBL" id="CHEMBL2046267"/>
<dbReference type="DrugBank" id="DB12319">
    <property type="generic name" value="Benzbromarone"/>
</dbReference>
<dbReference type="DrugBank" id="DB04941">
    <property type="generic name" value="Crofelemer"/>
</dbReference>
<dbReference type="DrugBank" id="DB09372">
    <property type="generic name" value="Tannic acid"/>
</dbReference>
<dbReference type="DrugCentral" id="Q5XXA6"/>
<dbReference type="GuidetoPHARMACOLOGY" id="708"/>
<dbReference type="TCDB" id="1.A.17.1.1">
    <property type="family name" value="the calcium-dependent chloride channel (ca-clc) family"/>
</dbReference>
<dbReference type="GlyCosmos" id="Q5XXA6">
    <property type="glycosylation" value="1 site, No reported glycans"/>
</dbReference>
<dbReference type="GlyGen" id="Q5XXA6">
    <property type="glycosylation" value="3 sites, 3 N-linked glycans (2 sites)"/>
</dbReference>
<dbReference type="iPTMnet" id="Q5XXA6"/>
<dbReference type="PhosphoSitePlus" id="Q5XXA6"/>
<dbReference type="SwissPalm" id="Q5XXA6"/>
<dbReference type="BioMuta" id="ANO1"/>
<dbReference type="DMDM" id="74708278"/>
<dbReference type="jPOST" id="Q5XXA6"/>
<dbReference type="MassIVE" id="Q5XXA6"/>
<dbReference type="PaxDb" id="9606-ENSP00000347454"/>
<dbReference type="PeptideAtlas" id="Q5XXA6"/>
<dbReference type="ProteomicsDB" id="22358"/>
<dbReference type="ProteomicsDB" id="65854">
    <molecule id="Q5XXA6-1"/>
</dbReference>
<dbReference type="ProteomicsDB" id="65855">
    <molecule id="Q5XXA6-2"/>
</dbReference>
<dbReference type="ProteomicsDB" id="65856">
    <molecule id="Q5XXA6-3"/>
</dbReference>
<dbReference type="Antibodypedia" id="30667">
    <property type="antibodies" value="1446 antibodies from 40 providers"/>
</dbReference>
<dbReference type="DNASU" id="55107"/>
<dbReference type="Ensembl" id="ENST00000316296.9">
    <molecule id="Q5XXA6-3"/>
    <property type="protein sequence ID" value="ENSP00000319477.5"/>
    <property type="gene ID" value="ENSG00000131620.18"/>
</dbReference>
<dbReference type="Ensembl" id="ENST00000355303.10">
    <molecule id="Q5XXA6-1"/>
    <property type="protein sequence ID" value="ENSP00000347454.5"/>
    <property type="gene ID" value="ENSG00000131620.18"/>
</dbReference>
<dbReference type="Ensembl" id="ENST00000530676.5">
    <molecule id="Q5XXA6-2"/>
    <property type="protein sequence ID" value="ENSP00000435797.1"/>
    <property type="gene ID" value="ENSG00000131620.18"/>
</dbReference>
<dbReference type="Ensembl" id="ENST00000531349.6">
    <molecule id="Q5XXA6-5"/>
    <property type="protein sequence ID" value="ENSP00000432843.2"/>
    <property type="gene ID" value="ENSG00000131620.18"/>
</dbReference>
<dbReference type="GeneID" id="55107"/>
<dbReference type="KEGG" id="hsa:55107"/>
<dbReference type="MANE-Select" id="ENST00000355303.10">
    <property type="protein sequence ID" value="ENSP00000347454.5"/>
    <property type="RefSeq nucleotide sequence ID" value="NM_018043.7"/>
    <property type="RefSeq protein sequence ID" value="NP_060513.5"/>
</dbReference>
<dbReference type="UCSC" id="uc001opj.4">
    <molecule id="Q5XXA6-1"/>
    <property type="organism name" value="human"/>
</dbReference>
<dbReference type="AGR" id="HGNC:21625"/>
<dbReference type="CTD" id="55107"/>
<dbReference type="DisGeNET" id="55107"/>
<dbReference type="GeneCards" id="ANO1"/>
<dbReference type="HGNC" id="HGNC:21625">
    <property type="gene designation" value="ANO1"/>
</dbReference>
<dbReference type="HPA" id="ENSG00000131620">
    <property type="expression patterns" value="Tissue enhanced (epididymis, seminal vesicle)"/>
</dbReference>
<dbReference type="MalaCards" id="ANO1"/>
<dbReference type="MIM" id="610108">
    <property type="type" value="gene"/>
</dbReference>
<dbReference type="MIM" id="620045">
    <property type="type" value="phenotype"/>
</dbReference>
<dbReference type="MIM" id="620687">
    <property type="type" value="phenotype"/>
</dbReference>
<dbReference type="neXtProt" id="NX_Q5XXA6"/>
<dbReference type="OpenTargets" id="ENSG00000131620"/>
<dbReference type="PharmGKB" id="PA164715378"/>
<dbReference type="VEuPathDB" id="HostDB:ENSG00000131620"/>
<dbReference type="eggNOG" id="KOG2514">
    <property type="taxonomic scope" value="Eukaryota"/>
</dbReference>
<dbReference type="GeneTree" id="ENSGT00940000157182"/>
<dbReference type="HOGENOM" id="CLU_006685_5_2_1"/>
<dbReference type="InParanoid" id="Q5XXA6"/>
<dbReference type="OMA" id="WKQRVRT"/>
<dbReference type="OrthoDB" id="296386at2759"/>
<dbReference type="PAN-GO" id="Q5XXA6">
    <property type="GO annotations" value="3 GO annotations based on evolutionary models"/>
</dbReference>
<dbReference type="PhylomeDB" id="Q5XXA6"/>
<dbReference type="TreeFam" id="TF314265"/>
<dbReference type="PathwayCommons" id="Q5XXA6"/>
<dbReference type="Reactome" id="R-HSA-2672351">
    <property type="pathway name" value="Stimuli-sensing channels"/>
</dbReference>
<dbReference type="Reactome" id="R-HSA-9733458">
    <property type="pathway name" value="Induction of Cell-Cell Fusion"/>
</dbReference>
<dbReference type="SignaLink" id="Q5XXA6"/>
<dbReference type="BioGRID-ORCS" id="55107">
    <property type="hits" value="17 hits in 1151 CRISPR screens"/>
</dbReference>
<dbReference type="ChiTaRS" id="ANO1">
    <property type="organism name" value="human"/>
</dbReference>
<dbReference type="GeneWiki" id="ANO1"/>
<dbReference type="GenomeRNAi" id="55107"/>
<dbReference type="Pharos" id="Q5XXA6">
    <property type="development level" value="Tclin"/>
</dbReference>
<dbReference type="PRO" id="PR:Q5XXA6"/>
<dbReference type="Proteomes" id="UP000005640">
    <property type="component" value="Chromosome 11"/>
</dbReference>
<dbReference type="RNAct" id="Q5XXA6">
    <property type="molecule type" value="protein"/>
</dbReference>
<dbReference type="Bgee" id="ENSG00000131620">
    <property type="expression patterns" value="Expressed in caput epididymis and 144 other cell types or tissues"/>
</dbReference>
<dbReference type="ExpressionAtlas" id="Q5XXA6">
    <property type="expression patterns" value="baseline and differential"/>
</dbReference>
<dbReference type="GO" id="GO:0016324">
    <property type="term" value="C:apical plasma membrane"/>
    <property type="evidence" value="ECO:0000314"/>
    <property type="project" value="UniProtKB"/>
</dbReference>
<dbReference type="GO" id="GO:0042995">
    <property type="term" value="C:cell projection"/>
    <property type="evidence" value="ECO:0007669"/>
    <property type="project" value="UniProtKB-KW"/>
</dbReference>
<dbReference type="GO" id="GO:0034707">
    <property type="term" value="C:chloride channel complex"/>
    <property type="evidence" value="ECO:0007669"/>
    <property type="project" value="UniProtKB-KW"/>
</dbReference>
<dbReference type="GO" id="GO:0070062">
    <property type="term" value="C:extracellular exosome"/>
    <property type="evidence" value="ECO:0007005"/>
    <property type="project" value="UniProtKB"/>
</dbReference>
<dbReference type="GO" id="GO:0005654">
    <property type="term" value="C:nucleoplasm"/>
    <property type="evidence" value="ECO:0000314"/>
    <property type="project" value="HPA"/>
</dbReference>
<dbReference type="GO" id="GO:0005886">
    <property type="term" value="C:plasma membrane"/>
    <property type="evidence" value="ECO:0000314"/>
    <property type="project" value="HPA"/>
</dbReference>
<dbReference type="GO" id="GO:0098793">
    <property type="term" value="C:presynapse"/>
    <property type="evidence" value="ECO:0007669"/>
    <property type="project" value="UniProtKB-SubCell"/>
</dbReference>
<dbReference type="GO" id="GO:0005227">
    <property type="term" value="F:calcium-activated cation channel activity"/>
    <property type="evidence" value="ECO:0000314"/>
    <property type="project" value="UniProtKB"/>
</dbReference>
<dbReference type="GO" id="GO:0005254">
    <property type="term" value="F:chloride channel activity"/>
    <property type="evidence" value="ECO:0000314"/>
    <property type="project" value="UniProtKB"/>
</dbReference>
<dbReference type="GO" id="GO:0042802">
    <property type="term" value="F:identical protein binding"/>
    <property type="evidence" value="ECO:0000353"/>
    <property type="project" value="UniProtKB"/>
</dbReference>
<dbReference type="GO" id="GO:0005229">
    <property type="term" value="F:intracellularly calcium-gated chloride channel activity"/>
    <property type="evidence" value="ECO:0000314"/>
    <property type="project" value="UniProtKB"/>
</dbReference>
<dbReference type="GO" id="GO:0015111">
    <property type="term" value="F:iodide transmembrane transporter activity"/>
    <property type="evidence" value="ECO:0000315"/>
    <property type="project" value="UniProtKB"/>
</dbReference>
<dbReference type="GO" id="GO:0046872">
    <property type="term" value="F:metal ion binding"/>
    <property type="evidence" value="ECO:0007669"/>
    <property type="project" value="UniProtKB-KW"/>
</dbReference>
<dbReference type="GO" id="GO:0042803">
    <property type="term" value="F:protein homodimerization activity"/>
    <property type="evidence" value="ECO:0000250"/>
    <property type="project" value="UniProtKB"/>
</dbReference>
<dbReference type="GO" id="GO:0005102">
    <property type="term" value="F:signaling receptor binding"/>
    <property type="evidence" value="ECO:0007669"/>
    <property type="project" value="Ensembl"/>
</dbReference>
<dbReference type="GO" id="GO:0005247">
    <property type="term" value="F:voltage-gated chloride channel activity"/>
    <property type="evidence" value="ECO:0000250"/>
    <property type="project" value="UniProtKB"/>
</dbReference>
<dbReference type="GO" id="GO:0034605">
    <property type="term" value="P:cellular response to heat"/>
    <property type="evidence" value="ECO:0000250"/>
    <property type="project" value="UniProtKB"/>
</dbReference>
<dbReference type="GO" id="GO:1901653">
    <property type="term" value="P:cellular response to peptide"/>
    <property type="evidence" value="ECO:0007669"/>
    <property type="project" value="Ensembl"/>
</dbReference>
<dbReference type="GO" id="GO:1902476">
    <property type="term" value="P:chloride transmembrane transport"/>
    <property type="evidence" value="ECO:0000314"/>
    <property type="project" value="UniProtKB"/>
</dbReference>
<dbReference type="GO" id="GO:0006821">
    <property type="term" value="P:chloride transport"/>
    <property type="evidence" value="ECO:0000315"/>
    <property type="project" value="UniProtKB"/>
</dbReference>
<dbReference type="GO" id="GO:0050965">
    <property type="term" value="P:detection of temperature stimulus involved in sensory perception of pain"/>
    <property type="evidence" value="ECO:0000250"/>
    <property type="project" value="UniProtKB"/>
</dbReference>
<dbReference type="GO" id="GO:0106091">
    <property type="term" value="P:glial cell projection elongation"/>
    <property type="evidence" value="ECO:0000250"/>
    <property type="project" value="UniProtKB"/>
</dbReference>
<dbReference type="GO" id="GO:0015705">
    <property type="term" value="P:iodide transport"/>
    <property type="evidence" value="ECO:0000315"/>
    <property type="project" value="UniProtKB"/>
</dbReference>
<dbReference type="GO" id="GO:0034220">
    <property type="term" value="P:monoatomic ion transmembrane transport"/>
    <property type="evidence" value="ECO:0000304"/>
    <property type="project" value="Reactome"/>
</dbReference>
<dbReference type="GO" id="GO:0070254">
    <property type="term" value="P:mucus secretion"/>
    <property type="evidence" value="ECO:0000315"/>
    <property type="project" value="UniProtKB"/>
</dbReference>
<dbReference type="GO" id="GO:0007200">
    <property type="term" value="P:phospholipase C-activating G protein-coupled receptor signaling pathway"/>
    <property type="evidence" value="ECO:0000250"/>
    <property type="project" value="UniProtKB"/>
</dbReference>
<dbReference type="GO" id="GO:0035774">
    <property type="term" value="P:positive regulation of insulin secretion involved in cellular response to glucose stimulus"/>
    <property type="evidence" value="ECO:0000315"/>
    <property type="project" value="UniProtKB"/>
</dbReference>
<dbReference type="GO" id="GO:0072657">
    <property type="term" value="P:protein localization to membrane"/>
    <property type="evidence" value="ECO:0000315"/>
    <property type="project" value="UniProtKB"/>
</dbReference>
<dbReference type="InterPro" id="IPR032394">
    <property type="entry name" value="Anoct_dimer"/>
</dbReference>
<dbReference type="InterPro" id="IPR007632">
    <property type="entry name" value="Anoctamin"/>
</dbReference>
<dbReference type="InterPro" id="IPR049452">
    <property type="entry name" value="Anoctamin_TM"/>
</dbReference>
<dbReference type="PANTHER" id="PTHR12308">
    <property type="entry name" value="ANOCTAMIN"/>
    <property type="match status" value="1"/>
</dbReference>
<dbReference type="PANTHER" id="PTHR12308:SF13">
    <property type="entry name" value="ANOCTAMIN-1"/>
    <property type="match status" value="1"/>
</dbReference>
<dbReference type="Pfam" id="PF16178">
    <property type="entry name" value="Anoct_dimer"/>
    <property type="match status" value="1"/>
</dbReference>
<dbReference type="Pfam" id="PF04547">
    <property type="entry name" value="Anoctamin"/>
    <property type="match status" value="1"/>
</dbReference>
<accession>Q5XXA6</accession>
<accession>A0A2H4Y9B2</accession>
<accession>A8KAM3</accession>
<accession>E9PNA7</accession>
<accession>Q8IYY8</accession>
<accession>Q8N7V3</accession>
<keyword id="KW-0025">Alternative splicing</keyword>
<keyword id="KW-0106">Calcium</keyword>
<keyword id="KW-1003">Cell membrane</keyword>
<keyword id="KW-0966">Cell projection</keyword>
<keyword id="KW-0868">Chloride</keyword>
<keyword id="KW-0869">Chloride channel</keyword>
<keyword id="KW-0217">Developmental protein</keyword>
<keyword id="KW-0225">Disease variant</keyword>
<keyword id="KW-1015">Disulfide bond</keyword>
<keyword id="KW-0325">Glycoprotein</keyword>
<keyword id="KW-0407">Ion channel</keyword>
<keyword id="KW-0406">Ion transport</keyword>
<keyword id="KW-0472">Membrane</keyword>
<keyword id="KW-0479">Metal-binding</keyword>
<keyword id="KW-0597">Phosphoprotein</keyword>
<keyword id="KW-1267">Proteomics identification</keyword>
<keyword id="KW-1185">Reference proteome</keyword>
<keyword id="KW-0770">Synapse</keyword>
<keyword id="KW-0812">Transmembrane</keyword>
<keyword id="KW-1133">Transmembrane helix</keyword>
<keyword id="KW-0813">Transport</keyword>
<protein>
    <recommendedName>
        <fullName>Anoctamin-1</fullName>
    </recommendedName>
    <alternativeName>
        <fullName>Discovered on gastrointestinal stromal tumors protein 1</fullName>
    </alternativeName>
    <alternativeName>
        <fullName>Oral cancer overexpressed protein 2</fullName>
    </alternativeName>
    <alternativeName>
        <fullName>Transmembrane protein 16A</fullName>
    </alternativeName>
    <alternativeName>
        <fullName>Tumor-amplified and overexpressed sequence 2</fullName>
    </alternativeName>
</protein>
<proteinExistence type="evidence at protein level"/>
<evidence type="ECO:0000250" key="1"/>
<evidence type="ECO:0000250" key="2">
    <source>
        <dbReference type="UniProtKB" id="Q8BHY3"/>
    </source>
</evidence>
<evidence type="ECO:0000255" key="3"/>
<evidence type="ECO:0000256" key="4">
    <source>
        <dbReference type="SAM" id="MobiDB-lite"/>
    </source>
</evidence>
<evidence type="ECO:0000269" key="5">
    <source>
    </source>
</evidence>
<evidence type="ECO:0000269" key="6">
    <source>
    </source>
</evidence>
<evidence type="ECO:0000269" key="7">
    <source>
    </source>
</evidence>
<evidence type="ECO:0000269" key="8">
    <source>
    </source>
</evidence>
<evidence type="ECO:0000269" key="9">
    <source>
    </source>
</evidence>
<evidence type="ECO:0000269" key="10">
    <source>
    </source>
</evidence>
<evidence type="ECO:0000269" key="11">
    <source>
    </source>
</evidence>
<evidence type="ECO:0000269" key="12">
    <source>
    </source>
</evidence>
<evidence type="ECO:0000269" key="13">
    <source>
    </source>
</evidence>
<evidence type="ECO:0000269" key="14">
    <source>
    </source>
</evidence>
<evidence type="ECO:0000269" key="15">
    <source>
    </source>
</evidence>
<evidence type="ECO:0000269" key="16">
    <source>
    </source>
</evidence>
<evidence type="ECO:0000269" key="17">
    <source>
    </source>
</evidence>
<evidence type="ECO:0000269" key="18">
    <source>
    </source>
</evidence>
<evidence type="ECO:0000269" key="19">
    <source>
    </source>
</evidence>
<evidence type="ECO:0000303" key="20">
    <source>
    </source>
</evidence>
<evidence type="ECO:0000303" key="21">
    <source>
    </source>
</evidence>
<evidence type="ECO:0000303" key="22">
    <source>
    </source>
</evidence>
<evidence type="ECO:0000303" key="23">
    <source>
    </source>
</evidence>
<evidence type="ECO:0000303" key="24">
    <source>
    </source>
</evidence>
<evidence type="ECO:0000305" key="25"/>
<evidence type="ECO:0007744" key="26">
    <source>
    </source>
</evidence>
<feature type="chain" id="PRO_0000288435" description="Anoctamin-1">
    <location>
        <begin position="1"/>
        <end position="986"/>
    </location>
</feature>
<feature type="topological domain" description="Cytoplasmic" evidence="25">
    <location>
        <begin position="1"/>
        <end position="333"/>
    </location>
</feature>
<feature type="transmembrane region" description="Helical" evidence="2">
    <location>
        <begin position="334"/>
        <end position="354"/>
    </location>
</feature>
<feature type="topological domain" description="Extracellular" evidence="25">
    <location>
        <begin position="355"/>
        <end position="406"/>
    </location>
</feature>
<feature type="transmembrane region" description="Helical" evidence="2">
    <location>
        <begin position="407"/>
        <end position="427"/>
    </location>
</feature>
<feature type="topological domain" description="Cytoplasmic" evidence="25">
    <location>
        <begin position="428"/>
        <end position="519"/>
    </location>
</feature>
<feature type="transmembrane region" description="Helical" evidence="2">
    <location>
        <begin position="520"/>
        <end position="540"/>
    </location>
</feature>
<feature type="topological domain" description="Extracellular" evidence="25">
    <location>
        <begin position="541"/>
        <end position="568"/>
    </location>
</feature>
<feature type="transmembrane region" description="Helical" evidence="2">
    <location>
        <begin position="569"/>
        <end position="589"/>
    </location>
</feature>
<feature type="topological domain" description="Cytoplasmic" evidence="25">
    <location>
        <begin position="590"/>
        <end position="607"/>
    </location>
</feature>
<feature type="transmembrane region" description="Helical" evidence="2">
    <location>
        <begin position="608"/>
        <end position="628"/>
    </location>
</feature>
<feature type="topological domain" description="Extracellular" evidence="25">
    <location>
        <begin position="629"/>
        <end position="657"/>
    </location>
</feature>
<feature type="transmembrane region" description="Helical" evidence="2">
    <location>
        <begin position="658"/>
        <end position="678"/>
    </location>
</feature>
<feature type="topological domain" description="Cytoplasmic" evidence="25">
    <location>
        <begin position="679"/>
        <end position="725"/>
    </location>
</feature>
<feature type="transmembrane region" description="Helical" evidence="2">
    <location>
        <begin position="726"/>
        <end position="746"/>
    </location>
</feature>
<feature type="transmembrane region" description="Helical" evidence="2">
    <location>
        <begin position="747"/>
        <end position="767"/>
    </location>
</feature>
<feature type="topological domain" description="Cytoplasmic" evidence="25">
    <location>
        <begin position="768"/>
        <end position="784"/>
    </location>
</feature>
<feature type="transmembrane region" description="Helical" evidence="2">
    <location>
        <begin position="785"/>
        <end position="805"/>
    </location>
</feature>
<feature type="topological domain" description="Extracellular" evidence="25">
    <location>
        <begin position="806"/>
        <end position="892"/>
    </location>
</feature>
<feature type="transmembrane region" description="Helical" evidence="2">
    <location>
        <begin position="893"/>
        <end position="913"/>
    </location>
</feature>
<feature type="topological domain" description="Cytoplasmic" evidence="25">
    <location>
        <begin position="914"/>
        <end position="986"/>
    </location>
</feature>
<feature type="region of interest" description="Disordered" evidence="4">
    <location>
        <begin position="79"/>
        <end position="121"/>
    </location>
</feature>
<feature type="region of interest" description="Disordered" evidence="4">
    <location>
        <begin position="951"/>
        <end position="986"/>
    </location>
</feature>
<feature type="compositionally biased region" description="Basic and acidic residues" evidence="4">
    <location>
        <begin position="951"/>
        <end position="960"/>
    </location>
</feature>
<feature type="binding site" evidence="2">
    <location>
        <position position="425"/>
    </location>
    <ligand>
        <name>Ca(2+)</name>
        <dbReference type="ChEBI" id="CHEBI:29108"/>
        <label>3</label>
    </ligand>
</feature>
<feature type="binding site" evidence="2">
    <location>
        <position position="677"/>
    </location>
    <ligand>
        <name>Ca(2+)</name>
        <dbReference type="ChEBI" id="CHEBI:29108"/>
        <label>1</label>
    </ligand>
</feature>
<feature type="binding site" evidence="2">
    <location>
        <position position="680"/>
    </location>
    <ligand>
        <name>Ca(2+)</name>
        <dbReference type="ChEBI" id="CHEBI:29108"/>
        <label>2</label>
    </ligand>
</feature>
<feature type="binding site" evidence="2">
    <location>
        <position position="728"/>
    </location>
    <ligand>
        <name>Ca(2+)</name>
        <dbReference type="ChEBI" id="CHEBI:29108"/>
        <label>2</label>
    </ligand>
</feature>
<feature type="binding site" evidence="2">
    <location>
        <position position="731"/>
    </location>
    <ligand>
        <name>Ca(2+)</name>
        <dbReference type="ChEBI" id="CHEBI:29108"/>
        <label>1</label>
    </ligand>
</feature>
<feature type="binding site" evidence="2">
    <location>
        <position position="760"/>
    </location>
    <ligand>
        <name>Ca(2+)</name>
        <dbReference type="ChEBI" id="CHEBI:29108"/>
        <label>1</label>
    </ligand>
</feature>
<feature type="binding site" evidence="2">
    <location>
        <position position="764"/>
    </location>
    <ligand>
        <name>Ca(2+)</name>
        <dbReference type="ChEBI" id="CHEBI:29108"/>
        <label>2</label>
    </ligand>
</feature>
<feature type="binding site" evidence="2">
    <location>
        <position position="909"/>
    </location>
    <ligand>
        <name>Ca(2+)</name>
        <dbReference type="ChEBI" id="CHEBI:29108"/>
        <label>3</label>
    </ligand>
</feature>
<feature type="binding site" evidence="2">
    <location>
        <position position="914"/>
    </location>
    <ligand>
        <name>Ca(2+)</name>
        <dbReference type="ChEBI" id="CHEBI:29108"/>
        <label>3</label>
    </ligand>
</feature>
<feature type="site" description="Unlikely to bind calcium but may play an important structural role" evidence="2">
    <location>
        <position position="428"/>
    </location>
</feature>
<feature type="modified residue" description="Phosphoserine" evidence="26">
    <location>
        <position position="107"/>
    </location>
</feature>
<feature type="modified residue" description="Phosphoserine" evidence="26">
    <location>
        <position position="196"/>
    </location>
</feature>
<feature type="glycosylation site" description="N-linked (GlcNAc...) asparagine" evidence="3">
    <location>
        <position position="832"/>
    </location>
</feature>
<feature type="disulfide bond" evidence="2">
    <location>
        <begin position="370"/>
        <end position="395"/>
    </location>
</feature>
<feature type="disulfide bond" evidence="2">
    <location>
        <begin position="379"/>
        <end position="862"/>
    </location>
</feature>
<feature type="disulfide bond" evidence="2">
    <location>
        <begin position="382"/>
        <end position="386"/>
    </location>
</feature>
<feature type="disulfide bond" evidence="2">
    <location>
        <begin position="651"/>
        <end position="656"/>
    </location>
</feature>
<feature type="splice variant" id="VSP_025665" description="In isoform 2." evidence="22">
    <location>
        <begin position="1"/>
        <end position="116"/>
    </location>
</feature>
<feature type="splice variant" id="VSP_025666" description="In isoform 3." evidence="20">
    <location>
        <begin position="1"/>
        <end position="28"/>
    </location>
</feature>
<feature type="splice variant" id="VSP_061539" description="In isoform 5." evidence="13">
    <original>M</original>
    <variation>MQEGDIGLEGLPPREVPTVEAAGAVDGEGAPPGGPSAQAATM</variation>
    <location>
        <position position="1"/>
    </location>
</feature>
<feature type="splice variant" id="VSP_025667" description="In isoform 3." evidence="20">
    <original>GYLPSEGT</original>
    <variation>MLTRPSQV</variation>
    <location>
        <begin position="29"/>
        <end position="36"/>
    </location>
</feature>
<feature type="splice variant" id="VSP_061540" description="In isoform 4." evidence="12">
    <location>
        <begin position="148"/>
        <end position="180"/>
    </location>
</feature>
<feature type="splice variant" id="VSP_061541" description="In isoform 5." evidence="13">
    <original>G</original>
    <variation>GQGEGRKKDSALLSKRRKCGKYG</variation>
    <location>
        <position position="267"/>
    </location>
</feature>
<feature type="splice variant" id="VSP_025668" description="In isoform 2 and isoform 3." evidence="20 22">
    <location>
        <begin position="448"/>
        <end position="451"/>
    </location>
</feature>
<feature type="splice variant" id="VSP_025669" description="In isoform 2, isoform 3 and isoform 4." evidence="12 20 22">
    <location>
        <begin position="476"/>
        <end position="501"/>
    </location>
</feature>
<feature type="splice variant" id="VSP_025670" description="In isoform 3." evidence="20">
    <original>CAPGGCLMELCIQLSIIMLGKQLIQNNLFEIGIPKMKKLIRYLKLKQQSP</original>
    <variation>VTEILFISGSPFCLAYDLSTPCTWEKQLQHICSAKSSRFLSFLLETFLFP</variation>
    <location>
        <begin position="651"/>
        <end position="700"/>
    </location>
</feature>
<feature type="splice variant" id="VSP_025671" description="In isoform 3." evidence="20">
    <location>
        <begin position="701"/>
        <end position="986"/>
    </location>
</feature>
<feature type="sequence variant" id="VAR_089302" description="In MYMY7; uncertain significance; no effect on intracellular calcium activated chloride channel activity; dbSNP:rs374910078." evidence="19">
    <original>R</original>
    <variation>Q</variation>
    <location>
        <position position="77"/>
    </location>
</feature>
<feature type="sequence variant" id="VAR_089303" description="In MYMY7; uncertain significance; increased intracellular calcium activated chloride channel activity; dbSNP:rs867890923." evidence="19">
    <original>E</original>
    <variation>K</variation>
    <location>
        <position position="170"/>
    </location>
</feature>
<feature type="sequence variant" id="VAR_089304" description="In MYMY7; uncertain significance; no effect on intracellular calcium activated chloride channel activity; dbSNP:rs1208950261." evidence="19">
    <original>S</original>
    <variation>T</variation>
    <location>
        <position position="196"/>
    </location>
</feature>
<feature type="sequence variant" id="VAR_089305" description="In MYMY7; uncertain significance; increased intracellular calcium activated chloride channel activity; dbSNP:rs2047668077." evidence="19">
    <original>E</original>
    <variation>K</variation>
    <location>
        <position position="459"/>
    </location>
</feature>
<feature type="sequence variant" id="VAR_032417" description="In dbSNP:rs2186797.">
    <original>F</original>
    <variation>S</variation>
    <location>
        <position position="608"/>
    </location>
</feature>
<feature type="sequence variant" id="VAR_089306" description="In MYMY7; uncertain significance; increased intracellular calcium activated chloride channel activity." evidence="19">
    <original>M</original>
    <variation>V</variation>
    <location>
        <position position="658"/>
    </location>
</feature>
<feature type="sequence variant" id="VAR_089307" description="In MYMY7; uncertain significance; increased intracellular calcium activated chloride channel activity." evidence="19">
    <original>T</original>
    <variation>I</variation>
    <location>
        <position position="740"/>
    </location>
</feature>
<feature type="sequence variant" id="VAR_089308" description="In MYMY7; uncertain significance; loss of intracellular calcium activated chloride channel activity; dbSNP:rs187484921." evidence="19">
    <original>R</original>
    <variation>Q</variation>
    <location>
        <position position="890"/>
    </location>
</feature>
<feature type="sequence variant" id="VAR_032418" description="In dbSNP:rs3740722.">
    <original>G</original>
    <variation>R</variation>
    <location>
        <position position="983"/>
    </location>
</feature>
<feature type="sequence conflict" description="In Ref. 3; BAF85777." evidence="25" ref="3">
    <original>T</original>
    <variation>A</variation>
    <location>
        <position position="202"/>
    </location>
</feature>
<feature type="sequence conflict" description="In Ref. 5; AAH33036." evidence="25" ref="5">
    <original>N</original>
    <variation>D</variation>
    <location>
        <position position="801"/>
    </location>
</feature>
<feature type="sequence conflict" description="In Ref. 5; AAH33036." evidence="25" ref="5">
    <original>W</original>
    <variation>C</variation>
    <location>
        <position position="948"/>
    </location>
</feature>
<comment type="function">
    <text evidence="2 7 9 10 15 16 17 18 19">Calcium-activated chloride channel (CaCC) (PubMed:20056604, PubMed:22178883, PubMed:22946059, PubMed:32487539). Plays a role in transepithelial anion transport and smooth muscle contraction. Required for the normal functioning of the interstitial cells of Cajal (ICCs) which generate electrical pacemaker activity in gastrointestinal smooth muscles. Acts as a major contributor to basal and stimulated chloride conductance in airway epithelial cells and plays an important role in tracheal cartilage development. Required for CFTR activation by enhancing endoplasmic reticulum Ca(2+) store release and is also required for CFTR membrane expression (PubMed:28963502). Required for basal and ATP-dependent mucus secretion in airways and intestine, probably by controlling exocytosis of mucus-filled granules by providing Ca(2+) to an apical signaling compartment (By similarity). Contributes to airway mucus expression induced by interleukins IL3 and IL8 and by the asthma-associated protein CLCA1 and is required for expression of mucin MUC5AC (PubMed:33026825). However, was shown in another study not to be required for MUC5AC expression (PubMed:31732694). Plays a role in the propagation of Ca(2+) waves in Kolliker's organ in the cochlea and contributes to the refinement of auditory brainstem circuitries prior to hearing onset (By similarity). In vomeronasal sensory neurons, modulates spontaneous firing patterns in the absence of stimuli as well as the firing pattern of pheromone-evoked activity (By similarity). Responsible for calcium-activated chloride channel activity in type I taste cells of the vallate papillae (By similarity). Acts as a heat sensor in nociceptive neurons (By similarity). In dorsal root ganglion neurons, plays a role in mediating non-histaminergic Mas-related G-protein coupled receptor (MRGPR)-dependent itching, acting as a downstream effector of MRGPRs (By similarity). In the developing brain, required for the Ca(2+)-dependent process extension of radial glial cells (By similarity).</text>
</comment>
<comment type="function">
    <molecule>Isoform 4</molecule>
    <text evidence="12">Calcium-activated chloride channel (CaCC). Contributes to calcium-activated chloride secretion in human sweat gland epithelial cells. Shows increased basal chloride permeability and decreased Ca(2+)-induced chloride permeability.</text>
</comment>
<comment type="function">
    <molecule>Isoform 5</molecule>
    <text evidence="13">Calcium-activated chloride channel (CaCC). Shows increased sensitivity to intracellular Ca(2+).</text>
</comment>
<comment type="catalytic activity">
    <reaction evidence="7 9 10 17 19">
        <text>chloride(in) = chloride(out)</text>
        <dbReference type="Rhea" id="RHEA:29823"/>
        <dbReference type="ChEBI" id="CHEBI:17996"/>
    </reaction>
</comment>
<comment type="activity regulation">
    <text evidence="2 9">ATP and calmodulin are essential for its activation. Channel activity is inhibited by CFTR protein and by chloride inhibitors such as niflumic acid (NFA) and 4,4'-diisothiocyanatostilbene-2,2'-disulfonic acid (DIDS). Activated by heat with activation seen at temperatures above 44 degrees Celsius (By similarity). Activated by BDNF in radial glial cells (By similarity).</text>
</comment>
<comment type="subunit">
    <text evidence="2 8 9 14 15">Homodimer (PubMed:21056985, PubMed:28559167). Interacts with CFTR (PubMed:22178883, PubMed:28963502). Interacts with TRPV4 (By similarity).</text>
</comment>
<comment type="subcellular location">
    <subcellularLocation>
        <location evidence="5 7 9 10 14 16 17">Apical cell membrane</location>
        <topology evidence="2">Multi-pass membrane protein</topology>
    </subcellularLocation>
    <subcellularLocation>
        <location evidence="2">Presynapse</location>
    </subcellularLocation>
    <text evidence="2">In differentiating airway epithelial cells, predominantly intracellular at day 0 but is apically localized by day 30. Expressed in the presynapse of retinal neurons (By similarity).</text>
</comment>
<comment type="alternative products">
    <event type="alternative splicing"/>
    <isoform>
        <id>Q5XXA6-1</id>
        <name>1</name>
        <name evidence="23">TMEM16A(ac)</name>
        <sequence type="displayed"/>
    </isoform>
    <isoform>
        <id>Q5XXA6-2</id>
        <name>2</name>
        <sequence type="described" ref="VSP_025665 VSP_025668 VSP_025669"/>
    </isoform>
    <isoform>
        <id>Q5XXA6-3</id>
        <name>3</name>
        <sequence type="described" ref="VSP_025666 VSP_025667 VSP_025668 VSP_025669 VSP_025670 VSP_025671"/>
    </isoform>
    <isoform>
        <id>Q5XXA6-4</id>
        <name>4</name>
        <name evidence="23">TMEM16A(ac-delta-e3)</name>
        <sequence type="described" ref="VSP_061540 VSP_025669"/>
    </isoform>
    <isoform>
        <id>Q5XXA6-5</id>
        <name>5</name>
        <name evidence="24">Ano1(+0)</name>
        <sequence type="described" ref="VSP_061539 VSP_061541"/>
    </isoform>
</comment>
<comment type="tissue specificity">
    <text evidence="5 6 11 12 17">Expressed in nasal epithelial cells (at protein level) (PubMed:32487539). In the kidney, expressed in the collecting duct (at protein level) (PubMed:24913262). Broadly expressed with higher levels in liver, skeletal muscle and gastrointestinal muscles (PubMed:15215166, PubMed:16906560). Expressed in eccrine sweat glands (PubMed:25220078).</text>
</comment>
<comment type="developmental stage">
    <text evidence="16">In airway epithelial cells, highly expressed during cell proliferation with levels decreasing as cell differentiation progresses (at protein level).</text>
</comment>
<comment type="induction">
    <text evidence="16 18">By IL13 (PubMed:33026825). By IL4, likely as a result of IL4-induced cell proliferation (PubMed:31732694). By wounding in airway epithelial cells with levels decreasing significantly during the healing process (PubMed:31732694).</text>
</comment>
<comment type="domain">
    <text evidence="1">The region spanning the fifth and sixth transmembrane domains probably forms the pore-forming region.</text>
</comment>
<comment type="disease" evidence="17">
    <disease id="DI-06508">
        <name>Intestinal dysmotility syndrome</name>
        <acronym>IDMTS</acronym>
        <description>An autosomal recessive disorder characterized by impaired intestinal peristalsis, recurrent episodes of haemorrhagic diarrhea, and distention of intestinal loops. Intestinal and hepatic portal venous gas, dysmorphic features, and developmental delay may also be present.</description>
        <dbReference type="MIM" id="620045"/>
    </disease>
    <text>The disease may be caused by variants affecting the gene represented in this entry.</text>
</comment>
<comment type="disease" evidence="19">
    <disease id="DI-06829">
        <name>Moyamoya disease 7</name>
        <acronym>MYMY7</acronym>
        <description>A form of Moyamoya disease, a progressive cerebral angiopathy characterized by bilateral intracranial carotid artery stenosis and telangiectatic vessels in the region of the basal ganglia. The abnormal vessels resemble a 'puff of smoke' (moyamoya) on cerebral angiogram. Affected individuals can develop transient ischemic attacks and/or cerebral infarction, and rupture of the collateral vessels can cause intracranial hemorrhage. Hemiplegia of sudden onset and epileptic seizures constitute the prevailing presentation in childhood, while subarachnoid bleeding occurs more frequently in adults. MYMY7 inheritance can be autosomal dominant or autosomal recessive.</description>
        <dbReference type="MIM" id="620687"/>
    </disease>
    <text>The disease may be caused by variants affecting the gene represented in this entry.</text>
</comment>
<comment type="miscellaneous">
    <text evidence="25">The term 'anoctamin' was coined because these channels are anion selective and are predicted to have eight (OCT) transmembrane segments. There is some dissatisfaction in the field with the Ano nomenclature because it is not certain that all the members of this family are anion channels or have the 8-transmembrane topology.</text>
</comment>
<comment type="similarity">
    <text evidence="25">Belongs to the anoctamin family.</text>
</comment>
<comment type="caution">
    <text evidence="2">Contains ten transmembrane regions, not eight as predicted.</text>
</comment>
<name>ANO1_HUMAN</name>
<organism>
    <name type="scientific">Homo sapiens</name>
    <name type="common">Human</name>
    <dbReference type="NCBI Taxonomy" id="9606"/>
    <lineage>
        <taxon>Eukaryota</taxon>
        <taxon>Metazoa</taxon>
        <taxon>Chordata</taxon>
        <taxon>Craniata</taxon>
        <taxon>Vertebrata</taxon>
        <taxon>Euteleostomi</taxon>
        <taxon>Mammalia</taxon>
        <taxon>Eutheria</taxon>
        <taxon>Euarchontoglires</taxon>
        <taxon>Primates</taxon>
        <taxon>Haplorrhini</taxon>
        <taxon>Catarrhini</taxon>
        <taxon>Hominidae</taxon>
        <taxon>Homo</taxon>
    </lineage>
</organism>
<sequence length="986" mass="114078">MRVNEKYSTLPAEDRSVHIINICAIEDIGYLPSEGTLLNSLSVDPDAECKYGLYFRDGRRKVDYILVYHHKRPSGNRTLVRRVQHSDTPSGARSVKQDHPLPGKGASLDAGSGEPPMDYHEDDKRFRREEYEGNLLEAGLELERDEDTKIHGVGFVKIHAPWNVLCREAEFLKLKMPTKKMYHINETRGLLKKINSVLQKITDPIQPKVAEHRPQTMKRLSYPFSREKQHLFDLSDKDSFFDSKTRSTIVYEILKRTTCTKAKYSMGITSLLANGVYAAAYPLHDGDYNGENVEFNDRKLLYEEWARYGVFYKYQPIDLVRKYFGEKIGLYFAWLGVYTQMLIPASIVGIIVFLYGCATMDENIPSMEMCDQRHNITMCPLCDKTCSYWKMSSACATARASHLFDNPATVFFSVFMALWAATFMEHWKRKQMRLNYRWDLTGFEEEEEAVKDHPRAEYEARVLEKSLKKESRNKEKRRHIPEESTNKWKQRVKTAMAGVKLTDKVKLTWRDRFPAYLTNLVSIIFMIAVTFAIVLGVIIYRISMAAALAMNSSPSVRSNIRVTVTATAVIINLVVIILLDEVYGCIARWLTKIEVPKTEKSFEERLIFKAFLLKFVNSYTPIFYVAFFKGRFVGRPGDYVYIFRSFRMEECAPGGCLMELCIQLSIIMLGKQLIQNNLFEIGIPKMKKLIRYLKLKQQSPPDHEECVKRKQRYEVDYNLEPFAGLTPEYMEMIIQFGFVTLFVASFPLAPLFALLNNIIEIRLDAKKFVTELRRPVAVRAKDIGIWYNILRGIGKLAVIINAFVISFTSDFIPRLVYLYMYSKNGTMHGFVNHTLSSFNVSDFQNGTAPNDPLDLGYEVQICRYKDYREPPWSENKYDISKDFWAVLAARLAFVIVFQNLVMFMSDFVDWVIPDIPKDISQQIHKEKVLMVELFMREEQDKQQLLETWMEKERQKDEPPCNHHNTKACPDSLGSPAPSHAYHGGVL</sequence>